<reference key="1">
    <citation type="journal article" date="1990" name="Nucleic Acids Res.">
        <title>Nucleotide sequence of a heat-shock and ripening-related cDNA from tomato.</title>
        <authorList>
            <person name="Fray R.G."/>
            <person name="Lycett G.W."/>
            <person name="Grierson D."/>
        </authorList>
    </citation>
    <scope>NUCLEOTIDE SEQUENCE [MRNA]</scope>
    <source>
        <strain>cv. Ailsa Craig</strain>
        <tissue>Pericarp</tissue>
    </source>
</reference>
<comment type="subunit">
    <text>Forms oligomeric structures.</text>
</comment>
<comment type="subcellular location">
    <subcellularLocation>
        <location>Cytoplasm</location>
    </subcellularLocation>
</comment>
<comment type="similarity">
    <text evidence="1">Belongs to the small heat shock protein (HSP20) family.</text>
</comment>
<organism>
    <name type="scientific">Solanum lycopersicum</name>
    <name type="common">Tomato</name>
    <name type="synonym">Lycopersicon esculentum</name>
    <dbReference type="NCBI Taxonomy" id="4081"/>
    <lineage>
        <taxon>Eukaryota</taxon>
        <taxon>Viridiplantae</taxon>
        <taxon>Streptophyta</taxon>
        <taxon>Embryophyta</taxon>
        <taxon>Tracheophyta</taxon>
        <taxon>Spermatophyta</taxon>
        <taxon>Magnoliopsida</taxon>
        <taxon>eudicotyledons</taxon>
        <taxon>Gunneridae</taxon>
        <taxon>Pentapetalae</taxon>
        <taxon>asterids</taxon>
        <taxon>lamiids</taxon>
        <taxon>Solanales</taxon>
        <taxon>Solanaceae</taxon>
        <taxon>Solanoideae</taxon>
        <taxon>Solaneae</taxon>
        <taxon>Solanum</taxon>
        <taxon>Solanum subgen. Lycopersicon</taxon>
    </lineage>
</organism>
<name>HSP11_SOLLC</name>
<feature type="chain" id="PRO_0000125977" description="17.8 kDa class I heat shock protein">
    <location>
        <begin position="1"/>
        <end position="154"/>
    </location>
</feature>
<feature type="domain" description="sHSP" evidence="1">
    <location>
        <begin position="40"/>
        <end position="154"/>
    </location>
</feature>
<sequence>MSLIPRIFGDRRSSSMFDPFSIDVFDPFRELGFPSTNSGESSAFANTRIDWKETPEPHVFKVDLPGLKKEEVKVEVEEDRVLQISGERNVEKEDKNDKWHRMERSSGKFMRRFRLPENAKMDQVKASMENGVLTVTVPKEEVKKPEVKSIEISG</sequence>
<keyword id="KW-0963">Cytoplasm</keyword>
<keyword id="KW-1185">Reference proteome</keyword>
<keyword id="KW-0346">Stress response</keyword>
<proteinExistence type="evidence at transcript level"/>
<accession>P30221</accession>
<dbReference type="EMBL" id="X56138">
    <property type="protein sequence ID" value="CAA39603.1"/>
    <property type="molecule type" value="mRNA"/>
</dbReference>
<dbReference type="PIR" id="S12629">
    <property type="entry name" value="S12629"/>
</dbReference>
<dbReference type="SMR" id="P30221"/>
<dbReference type="FunCoup" id="P30221">
    <property type="interactions" value="164"/>
</dbReference>
<dbReference type="STRING" id="4081.P30221"/>
<dbReference type="PaxDb" id="4081-Solyc06g076520.1.1"/>
<dbReference type="eggNOG" id="KOG0710">
    <property type="taxonomic scope" value="Eukaryota"/>
</dbReference>
<dbReference type="InParanoid" id="P30221"/>
<dbReference type="Proteomes" id="UP000004994">
    <property type="component" value="Unplaced"/>
</dbReference>
<dbReference type="ExpressionAtlas" id="P30221">
    <property type="expression patterns" value="baseline and differential"/>
</dbReference>
<dbReference type="GO" id="GO:0005737">
    <property type="term" value="C:cytoplasm"/>
    <property type="evidence" value="ECO:0007669"/>
    <property type="project" value="UniProtKB-SubCell"/>
</dbReference>
<dbReference type="GO" id="GO:0051082">
    <property type="term" value="F:unfolded protein binding"/>
    <property type="evidence" value="ECO:0000318"/>
    <property type="project" value="GO_Central"/>
</dbReference>
<dbReference type="GO" id="GO:0051259">
    <property type="term" value="P:protein complex oligomerization"/>
    <property type="evidence" value="ECO:0000318"/>
    <property type="project" value="GO_Central"/>
</dbReference>
<dbReference type="GO" id="GO:0006457">
    <property type="term" value="P:protein folding"/>
    <property type="evidence" value="ECO:0000318"/>
    <property type="project" value="GO_Central"/>
</dbReference>
<dbReference type="GO" id="GO:0009408">
    <property type="term" value="P:response to heat"/>
    <property type="evidence" value="ECO:0000318"/>
    <property type="project" value="GO_Central"/>
</dbReference>
<dbReference type="GO" id="GO:0042542">
    <property type="term" value="P:response to hydrogen peroxide"/>
    <property type="evidence" value="ECO:0000318"/>
    <property type="project" value="GO_Central"/>
</dbReference>
<dbReference type="GO" id="GO:0009651">
    <property type="term" value="P:response to salt stress"/>
    <property type="evidence" value="ECO:0000318"/>
    <property type="project" value="GO_Central"/>
</dbReference>
<dbReference type="CDD" id="cd06472">
    <property type="entry name" value="ACD_ScHsp26_like"/>
    <property type="match status" value="1"/>
</dbReference>
<dbReference type="FunFam" id="2.60.40.790:FF:000009">
    <property type="entry name" value="17.6 kDa class I heat shock protein-like"/>
    <property type="match status" value="1"/>
</dbReference>
<dbReference type="Gene3D" id="2.60.40.790">
    <property type="match status" value="1"/>
</dbReference>
<dbReference type="InterPro" id="IPR002068">
    <property type="entry name" value="A-crystallin/Hsp20_dom"/>
</dbReference>
<dbReference type="InterPro" id="IPR008978">
    <property type="entry name" value="HSP20-like_chaperone"/>
</dbReference>
<dbReference type="InterPro" id="IPR031107">
    <property type="entry name" value="Small_HSP"/>
</dbReference>
<dbReference type="PANTHER" id="PTHR11527">
    <property type="entry name" value="HEAT-SHOCK PROTEIN 20 FAMILY MEMBER"/>
    <property type="match status" value="1"/>
</dbReference>
<dbReference type="Pfam" id="PF00011">
    <property type="entry name" value="HSP20"/>
    <property type="match status" value="1"/>
</dbReference>
<dbReference type="SUPFAM" id="SSF49764">
    <property type="entry name" value="HSP20-like chaperones"/>
    <property type="match status" value="1"/>
</dbReference>
<dbReference type="PROSITE" id="PS01031">
    <property type="entry name" value="SHSP"/>
    <property type="match status" value="1"/>
</dbReference>
<protein>
    <recommendedName>
        <fullName>17.8 kDa class I heat shock protein</fullName>
    </recommendedName>
</protein>
<evidence type="ECO:0000255" key="1">
    <source>
        <dbReference type="PROSITE-ProRule" id="PRU00285"/>
    </source>
</evidence>